<gene>
    <name type="primary">TNF</name>
    <name type="synonym">TNFA</name>
    <name type="synonym">TNFSF2</name>
</gene>
<accession>P19101</accession>
<accession>Q8HYM0</accession>
<organism>
    <name type="scientific">Felis catus</name>
    <name type="common">Cat</name>
    <name type="synonym">Felis silvestris catus</name>
    <dbReference type="NCBI Taxonomy" id="9685"/>
    <lineage>
        <taxon>Eukaryota</taxon>
        <taxon>Metazoa</taxon>
        <taxon>Chordata</taxon>
        <taxon>Craniata</taxon>
        <taxon>Vertebrata</taxon>
        <taxon>Euteleostomi</taxon>
        <taxon>Mammalia</taxon>
        <taxon>Eutheria</taxon>
        <taxon>Laurasiatheria</taxon>
        <taxon>Carnivora</taxon>
        <taxon>Feliformia</taxon>
        <taxon>Felidae</taxon>
        <taxon>Felinae</taxon>
        <taxon>Felis</taxon>
    </lineage>
</organism>
<feature type="chain" id="PRO_0000034419" description="Tumor necrosis factor, membrane form">
    <location>
        <begin position="1"/>
        <end position="233"/>
    </location>
</feature>
<feature type="chain" id="PRO_0000417223" description="Intracellular domain 1" evidence="1">
    <location>
        <begin position="1"/>
        <end position="39"/>
    </location>
</feature>
<feature type="chain" id="PRO_0000417224" description="Intracellular domain 2" evidence="1">
    <location>
        <begin position="1"/>
        <end position="35"/>
    </location>
</feature>
<feature type="chain" id="PRO_0000417225" description="C-domain 1" evidence="1">
    <location>
        <begin position="50"/>
        <end status="unknown"/>
    </location>
</feature>
<feature type="chain" id="PRO_0000417226" description="C-domain 2" evidence="1">
    <location>
        <begin position="52"/>
        <end status="unknown"/>
    </location>
</feature>
<feature type="chain" id="PRO_0000034420" description="Tumor necrosis factor, soluble form">
    <location>
        <begin position="77"/>
        <end position="233"/>
    </location>
</feature>
<feature type="topological domain" description="Cytoplasmic" evidence="4">
    <location>
        <begin position="1"/>
        <end position="35"/>
    </location>
</feature>
<feature type="transmembrane region" description="Helical; Signal-anchor for type II membrane protein" evidence="4">
    <location>
        <begin position="36"/>
        <end position="56"/>
    </location>
</feature>
<feature type="topological domain" description="Extracellular" evidence="4">
    <location>
        <begin position="57"/>
        <end position="233"/>
    </location>
</feature>
<feature type="domain" description="THD" evidence="5">
    <location>
        <begin position="88"/>
        <end position="233"/>
    </location>
</feature>
<feature type="site" description="Cleavage; by SPPL2A or SPPL2B" evidence="1">
    <location>
        <begin position="34"/>
        <end position="35"/>
    </location>
</feature>
<feature type="site" description="Cleavage; by SPPL2A or SPPL2B" evidence="1">
    <location>
        <begin position="39"/>
        <end position="40"/>
    </location>
</feature>
<feature type="site" description="Cleavage; by SPPL2A or SPPL2B" evidence="1">
    <location>
        <begin position="49"/>
        <end position="50"/>
    </location>
</feature>
<feature type="site" description="Cleavage; by SPPL2A or SPPL2B" evidence="1">
    <location>
        <begin position="51"/>
        <end position="52"/>
    </location>
</feature>
<feature type="site" description="Cleavage; by ADAM17" evidence="1">
    <location>
        <begin position="76"/>
        <end position="77"/>
    </location>
</feature>
<feature type="modified residue" description="Phosphoserine; by CK1" evidence="1">
    <location>
        <position position="2"/>
    </location>
</feature>
<feature type="lipid moiety-binding region" description="N6-myristoyl lysine" evidence="2">
    <location>
        <position position="19"/>
    </location>
</feature>
<feature type="lipid moiety-binding region" description="N6-myristoyl lysine" evidence="2">
    <location>
        <position position="20"/>
    </location>
</feature>
<feature type="glycosylation site" description="O-linked (GalNAc...) serine; in soluble form" evidence="1">
    <location>
        <position position="80"/>
    </location>
</feature>
<feature type="disulfide bond" evidence="5">
    <location>
        <begin position="145"/>
        <end position="177"/>
    </location>
</feature>
<feature type="sequence conflict" description="In Ref. 2; AAA30818." evidence="6" ref="2">
    <original>G</original>
    <variation>R</variation>
    <location>
        <position position="28"/>
    </location>
</feature>
<feature type="sequence conflict" description="In Ref. 1; CAA37948." evidence="6" ref="1">
    <original>W</original>
    <variation>R</variation>
    <location>
        <position position="104"/>
    </location>
</feature>
<feature type="sequence conflict" description="In Ref. 3; AAO15590." evidence="6" ref="3">
    <original>T</original>
    <variation>K</variation>
    <location>
        <position position="141"/>
    </location>
</feature>
<feature type="sequence conflict" description="In Ref. 2; AAA30818." evidence="6" ref="2">
    <original>L</original>
    <variation>H</variation>
    <location>
        <position position="151"/>
    </location>
</feature>
<feature type="sequence conflict" description="In Ref. 1; CAA37948." evidence="6" ref="1">
    <original>T</original>
    <variation>A</variation>
    <location>
        <position position="155"/>
    </location>
</feature>
<feature type="sequence conflict" description="In Ref. 2; AAA30818." evidence="6" ref="2">
    <original>T</original>
    <variation>A</variation>
    <location>
        <position position="210"/>
    </location>
</feature>
<keyword id="KW-1003">Cell membrane</keyword>
<keyword id="KW-0202">Cytokine</keyword>
<keyword id="KW-1015">Disulfide bond</keyword>
<keyword id="KW-0325">Glycoprotein</keyword>
<keyword id="KW-0449">Lipoprotein</keyword>
<keyword id="KW-0472">Membrane</keyword>
<keyword id="KW-0519">Myristate</keyword>
<keyword id="KW-0597">Phosphoprotein</keyword>
<keyword id="KW-1185">Reference proteome</keyword>
<keyword id="KW-0964">Secreted</keyword>
<keyword id="KW-0735">Signal-anchor</keyword>
<keyword id="KW-0812">Transmembrane</keyword>
<keyword id="KW-1133">Transmembrane helix</keyword>
<protein>
    <recommendedName>
        <fullName>Tumor necrosis factor</fullName>
    </recommendedName>
    <alternativeName>
        <fullName>Cachectin</fullName>
    </alternativeName>
    <alternativeName>
        <fullName>TNF-alpha</fullName>
    </alternativeName>
    <alternativeName>
        <fullName>Tumor necrosis factor ligand superfamily member 2</fullName>
        <shortName>TNF-a</shortName>
    </alternativeName>
    <component>
        <recommendedName>
            <fullName>Tumor necrosis factor, membrane form</fullName>
        </recommendedName>
        <alternativeName>
            <fullName>N-terminal fragment</fullName>
            <shortName>NTF</shortName>
        </alternativeName>
    </component>
    <component>
        <recommendedName>
            <fullName>Intracellular domain 1</fullName>
            <shortName>ICD1</shortName>
        </recommendedName>
    </component>
    <component>
        <recommendedName>
            <fullName>Intracellular domain 2</fullName>
            <shortName>ICD2</shortName>
        </recommendedName>
    </component>
    <component>
        <recommendedName>
            <fullName>C-domain 1</fullName>
        </recommendedName>
    </component>
    <component>
        <recommendedName>
            <fullName>C-domain 2</fullName>
        </recommendedName>
    </component>
    <component>
        <recommendedName>
            <fullName>Tumor necrosis factor, soluble form</fullName>
        </recommendedName>
    </component>
</protein>
<evidence type="ECO:0000250" key="1"/>
<evidence type="ECO:0000250" key="2">
    <source>
        <dbReference type="UniProtKB" id="P01375"/>
    </source>
</evidence>
<evidence type="ECO:0000250" key="3">
    <source>
        <dbReference type="UniProtKB" id="P06804"/>
    </source>
</evidence>
<evidence type="ECO:0000255" key="4"/>
<evidence type="ECO:0000255" key="5">
    <source>
        <dbReference type="PROSITE-ProRule" id="PRU01387"/>
    </source>
</evidence>
<evidence type="ECO:0000305" key="6"/>
<name>TNFA_FELCA</name>
<comment type="function">
    <text evidence="2 3">Cytokine that binds to TNFRSF1A/TNFR1 and TNFRSF1B/TNFBR. It is mainly secreted by macrophages and can induce cell death of certain tumor cell lines. It is potent pyrogen causing fever by direct action or by stimulation of interleukin-1 secretion and is implicated in the induction of cachexia, Under certain conditions it can stimulate cell proliferation and induce cell differentiation (By similarity). Induces insulin resistance in adipocytes via inhibition of insulin-induced IRS1 tyrosine phosphorylation and insulin-induced glucose uptake. Induces GKAP42 protein degradation in adipocytes which is partially responsible for TNF-induced insulin resistance (By similarity). Plays a role in angiogenesis by inducing VEGF production synergistically with IL1B and IL6 (By similarity). Promotes osteoclastogenesis and therefore mediates bone resorption (By similarity).</text>
</comment>
<comment type="function">
    <text evidence="2">The TNF intracellular domain (ICD) form induces IL12 production in dendritic cells.</text>
</comment>
<comment type="subunit">
    <text evidence="1">Homotrimer. Interacts with SPPL2B (By similarity).</text>
</comment>
<comment type="subcellular location">
    <subcellularLocation>
        <location evidence="1">Cell membrane</location>
        <topology evidence="1">Single-pass type II membrane protein</topology>
    </subcellularLocation>
</comment>
<comment type="subcellular location">
    <molecule>Tumor necrosis factor, membrane form</molecule>
    <subcellularLocation>
        <location evidence="1">Membrane</location>
        <topology evidence="1">Single-pass type II membrane protein</topology>
    </subcellularLocation>
</comment>
<comment type="subcellular location">
    <molecule>Tumor necrosis factor, soluble form</molecule>
    <subcellularLocation>
        <location evidence="1">Secreted</location>
    </subcellularLocation>
</comment>
<comment type="subcellular location">
    <molecule>C-domain 1</molecule>
    <subcellularLocation>
        <location evidence="1">Secreted</location>
    </subcellularLocation>
</comment>
<comment type="subcellular location">
    <molecule>C-domain 2</molecule>
    <subcellularLocation>
        <location evidence="1">Secreted</location>
    </subcellularLocation>
</comment>
<comment type="PTM">
    <text evidence="1">The soluble form derives from the membrane form by proteolytic processing. The membrane-bound form is further proteolytically processed by SPPL2A or SPPL2B through regulated intramembrane proteolysis producing TNF intracellular domains (ICD1 and ICD2) released in the cytosol and TNF C-domain 1 and C-domain 2 secreted into the extracellular space (By similarity).</text>
</comment>
<comment type="PTM">
    <text evidence="1">The membrane form, but not the soluble form, is phosphorylated on serine residues. Dephosphorylation of the membrane form occurs by binding to soluble TNFRSF1A/TNFR1 (By similarity).</text>
</comment>
<comment type="PTM">
    <text evidence="1">O-glycosylated; glycans contain galactose, N-acetylgalactosamine and N-acetylneuraminic acid.</text>
</comment>
<comment type="PTM">
    <molecule>Tumor necrosis factor, soluble form</molecule>
    <text evidence="2">The soluble form is demyristoylated by SIRT6, promoting its secretion.</text>
</comment>
<comment type="similarity">
    <text evidence="6">Belongs to the tumor necrosis factor family.</text>
</comment>
<proteinExistence type="evidence at transcript level"/>
<dbReference type="EMBL" id="X54000">
    <property type="protein sequence ID" value="CAA37948.1"/>
    <property type="molecule type" value="Genomic_DNA"/>
</dbReference>
<dbReference type="EMBL" id="M92061">
    <property type="protein sequence ID" value="AAA30818.1"/>
    <property type="molecule type" value="mRNA"/>
</dbReference>
<dbReference type="EMBL" id="AF459810">
    <property type="protein sequence ID" value="AAO15590.1"/>
    <property type="molecule type" value="Genomic_DNA"/>
</dbReference>
<dbReference type="PIR" id="S11688">
    <property type="entry name" value="S11688"/>
</dbReference>
<dbReference type="RefSeq" id="NP_001009835.1">
    <property type="nucleotide sequence ID" value="NM_001009835.1"/>
</dbReference>
<dbReference type="SMR" id="P19101"/>
<dbReference type="FunCoup" id="P19101">
    <property type="interactions" value="142"/>
</dbReference>
<dbReference type="STRING" id="9685.ENSFCAP00000051032"/>
<dbReference type="GlyCosmos" id="P19101">
    <property type="glycosylation" value="1 site, No reported glycans"/>
</dbReference>
<dbReference type="PaxDb" id="9685-ENSFCAP00000004153"/>
<dbReference type="GeneID" id="493755"/>
<dbReference type="KEGG" id="fca:493755"/>
<dbReference type="CTD" id="7124"/>
<dbReference type="eggNOG" id="ENOG502S4K8">
    <property type="taxonomic scope" value="Eukaryota"/>
</dbReference>
<dbReference type="InParanoid" id="P19101"/>
<dbReference type="OrthoDB" id="9940698at2759"/>
<dbReference type="Proteomes" id="UP000011712">
    <property type="component" value="Unplaced"/>
</dbReference>
<dbReference type="GO" id="GO:0005615">
    <property type="term" value="C:extracellular space"/>
    <property type="evidence" value="ECO:0000318"/>
    <property type="project" value="GO_Central"/>
</dbReference>
<dbReference type="GO" id="GO:0005886">
    <property type="term" value="C:plasma membrane"/>
    <property type="evidence" value="ECO:0007669"/>
    <property type="project" value="UniProtKB-SubCell"/>
</dbReference>
<dbReference type="GO" id="GO:0005125">
    <property type="term" value="F:cytokine activity"/>
    <property type="evidence" value="ECO:0000318"/>
    <property type="project" value="GO_Central"/>
</dbReference>
<dbReference type="GO" id="GO:0005164">
    <property type="term" value="F:tumor necrosis factor receptor binding"/>
    <property type="evidence" value="ECO:0007669"/>
    <property type="project" value="InterPro"/>
</dbReference>
<dbReference type="GO" id="GO:0008625">
    <property type="term" value="P:extrinsic apoptotic signaling pathway via death domain receptors"/>
    <property type="evidence" value="ECO:0000318"/>
    <property type="project" value="GO_Central"/>
</dbReference>
<dbReference type="GO" id="GO:0006955">
    <property type="term" value="P:immune response"/>
    <property type="evidence" value="ECO:0000318"/>
    <property type="project" value="GO_Central"/>
</dbReference>
<dbReference type="GO" id="GO:0097527">
    <property type="term" value="P:necroptotic signaling pathway"/>
    <property type="evidence" value="ECO:0000250"/>
    <property type="project" value="UniProtKB"/>
</dbReference>
<dbReference type="GO" id="GO:0043242">
    <property type="term" value="P:negative regulation of protein-containing complex disassembly"/>
    <property type="evidence" value="ECO:0000250"/>
    <property type="project" value="UniProtKB"/>
</dbReference>
<dbReference type="GO" id="GO:0043065">
    <property type="term" value="P:positive regulation of apoptotic process"/>
    <property type="evidence" value="ECO:0000250"/>
    <property type="project" value="UniProtKB"/>
</dbReference>
<dbReference type="GO" id="GO:0043123">
    <property type="term" value="P:positive regulation of canonical NF-kappaB signal transduction"/>
    <property type="evidence" value="ECO:0000318"/>
    <property type="project" value="GO_Central"/>
</dbReference>
<dbReference type="GO" id="GO:2001238">
    <property type="term" value="P:positive regulation of extrinsic apoptotic signaling pathway"/>
    <property type="evidence" value="ECO:0000318"/>
    <property type="project" value="GO_Central"/>
</dbReference>
<dbReference type="GO" id="GO:0043507">
    <property type="term" value="P:positive regulation of JUN kinase activity"/>
    <property type="evidence" value="ECO:0000250"/>
    <property type="project" value="UniProtKB"/>
</dbReference>
<dbReference type="GO" id="GO:0043406">
    <property type="term" value="P:positive regulation of MAP kinase activity"/>
    <property type="evidence" value="ECO:0000250"/>
    <property type="project" value="UniProtKB"/>
</dbReference>
<dbReference type="GO" id="GO:0051092">
    <property type="term" value="P:positive regulation of NF-kappaB transcription factor activity"/>
    <property type="evidence" value="ECO:0000250"/>
    <property type="project" value="UniProtKB"/>
</dbReference>
<dbReference type="GO" id="GO:0001934">
    <property type="term" value="P:positive regulation of protein phosphorylation"/>
    <property type="evidence" value="ECO:0000250"/>
    <property type="project" value="UniProtKB"/>
</dbReference>
<dbReference type="GO" id="GO:0043243">
    <property type="term" value="P:positive regulation of protein-containing complex disassembly"/>
    <property type="evidence" value="ECO:0000250"/>
    <property type="project" value="UniProtKB"/>
</dbReference>
<dbReference type="GO" id="GO:0065008">
    <property type="term" value="P:regulation of biological quality"/>
    <property type="evidence" value="ECO:0007669"/>
    <property type="project" value="UniProtKB-ARBA"/>
</dbReference>
<dbReference type="GO" id="GO:0050793">
    <property type="term" value="P:regulation of developmental process"/>
    <property type="evidence" value="ECO:0007669"/>
    <property type="project" value="UniProtKB-ARBA"/>
</dbReference>
<dbReference type="GO" id="GO:0051239">
    <property type="term" value="P:regulation of multicellular organismal process"/>
    <property type="evidence" value="ECO:0007669"/>
    <property type="project" value="UniProtKB-ARBA"/>
</dbReference>
<dbReference type="GO" id="GO:0051046">
    <property type="term" value="P:regulation of secretion"/>
    <property type="evidence" value="ECO:0007669"/>
    <property type="project" value="UniProtKB-ARBA"/>
</dbReference>
<dbReference type="GO" id="GO:0033209">
    <property type="term" value="P:tumor necrosis factor-mediated signaling pathway"/>
    <property type="evidence" value="ECO:0000318"/>
    <property type="project" value="GO_Central"/>
</dbReference>
<dbReference type="GO" id="GO:0010573">
    <property type="term" value="P:vascular endothelial growth factor production"/>
    <property type="evidence" value="ECO:0000250"/>
    <property type="project" value="UniProtKB"/>
</dbReference>
<dbReference type="CDD" id="cd00184">
    <property type="entry name" value="TNF"/>
    <property type="match status" value="1"/>
</dbReference>
<dbReference type="FunFam" id="2.60.120.40:FF:000007">
    <property type="entry name" value="Tumor necrosis factor"/>
    <property type="match status" value="1"/>
</dbReference>
<dbReference type="Gene3D" id="2.60.120.40">
    <property type="match status" value="1"/>
</dbReference>
<dbReference type="InterPro" id="IPR006053">
    <property type="entry name" value="TNF"/>
</dbReference>
<dbReference type="InterPro" id="IPR002959">
    <property type="entry name" value="TNF_alpha"/>
</dbReference>
<dbReference type="InterPro" id="IPR021184">
    <property type="entry name" value="TNF_CS"/>
</dbReference>
<dbReference type="InterPro" id="IPR006052">
    <property type="entry name" value="TNF_dom"/>
</dbReference>
<dbReference type="InterPro" id="IPR008983">
    <property type="entry name" value="Tumour_necrosis_fac-like_dom"/>
</dbReference>
<dbReference type="PANTHER" id="PTHR11471:SF23">
    <property type="entry name" value="TUMOR NECROSIS FACTOR"/>
    <property type="match status" value="1"/>
</dbReference>
<dbReference type="PANTHER" id="PTHR11471">
    <property type="entry name" value="TUMOR NECROSIS FACTOR FAMILY MEMBER"/>
    <property type="match status" value="1"/>
</dbReference>
<dbReference type="Pfam" id="PF00229">
    <property type="entry name" value="TNF"/>
    <property type="match status" value="1"/>
</dbReference>
<dbReference type="PRINTS" id="PR01234">
    <property type="entry name" value="TNECROSISFCT"/>
</dbReference>
<dbReference type="PRINTS" id="PR01235">
    <property type="entry name" value="TNFALPHA"/>
</dbReference>
<dbReference type="SMART" id="SM00207">
    <property type="entry name" value="TNF"/>
    <property type="match status" value="1"/>
</dbReference>
<dbReference type="SUPFAM" id="SSF49842">
    <property type="entry name" value="TNF-like"/>
    <property type="match status" value="1"/>
</dbReference>
<dbReference type="PROSITE" id="PS00251">
    <property type="entry name" value="THD_1"/>
    <property type="match status" value="1"/>
</dbReference>
<dbReference type="PROSITE" id="PS50049">
    <property type="entry name" value="THD_2"/>
    <property type="match status" value="1"/>
</dbReference>
<reference key="1">
    <citation type="journal article" date="1990" name="Nucleic Acids Res.">
        <title>Gene sequence of feline tumor necrosis factor alpha.</title>
        <authorList>
            <person name="McGraw R.A."/>
            <person name="Coffee B.W."/>
            <person name="Otto C.M."/>
            <person name="Drews R.T."/>
            <person name="Rawlings C.A."/>
        </authorList>
    </citation>
    <scope>NUCLEOTIDE SEQUENCE [GENOMIC DNA]</scope>
    <source>
        <tissue>Blood</tissue>
    </source>
</reference>
<reference key="2">
    <citation type="journal article" date="1992" name="Anim. Biotechnol.">
        <title>Feline cytokines TNF alpha and IL-1 beta: PCR cloning and sequencing of cDNA.</title>
        <authorList>
            <person name="Daniel S.L."/>
            <person name="Brenner C.A."/>
            <person name="Legendre A.M."/>
            <person name="Soloman A."/>
            <person name="Rouse B.T."/>
        </authorList>
    </citation>
    <scope>NUCLEOTIDE SEQUENCE [MRNA]</scope>
    <source>
        <tissue>Bone marrow</tissue>
    </source>
</reference>
<reference key="3">
    <citation type="submission" date="2001-12" db="EMBL/GenBank/DDBJ databases">
        <title>Characterization of 8 feline type I markers.</title>
        <authorList>
            <person name="Susott E.E."/>
            <person name="Rollo W.A."/>
            <person name="Venta P.J."/>
            <person name="Ewart S.L."/>
        </authorList>
    </citation>
    <scope>NUCLEOTIDE SEQUENCE OF 95-185</scope>
</reference>
<sequence length="233" mass="25382">MSTESMIRDVELAEEALPKKAGGPQGSGRCLCLSLFSFLLVAGATTLFCLLHFGVIGPQREELPHGLQLINPLPQTLRSSSRTPSDKPVAHVVANPEAEGQLQWLSRRANALLANGVELTDNQLKVPSDGLYLIYSQVLFTGQGCPSTHVLLTHTISRFAVSYQTKVNLLSAIKSPCQRETPEGAEAKPWYEPIYLGGVFQLEKGDRLSTEINLPAYLDFAESGQVYFGIIAL</sequence>